<reference key="1">
    <citation type="journal article" date="2007" name="Nature">
        <title>Evolution of genes and genomes on the Drosophila phylogeny.</title>
        <authorList>
            <consortium name="Drosophila 12 genomes consortium"/>
        </authorList>
    </citation>
    <scope>NUCLEOTIDE SEQUENCE [LARGE SCALE GENOMIC DNA]</scope>
    <source>
        <strain>Tucson 14024-0371.13</strain>
    </source>
</reference>
<sequence length="1140" mass="133351">MARYTQRPENALKRANEFIEVGKPLRALDTLQEVFRNKRWNYAYSETVIEPLMFKYLYLCVELKKSHIAKEGLFQYRNMFQLVNVNSLENVIRGYLKMAEEHTEAAQAQSSAAVAVLELDDLDNIATPESILMSAVCGEDAQDRSDRTILLPWVKFLWESYCQCLELLRVNTHCEALYHDIARMAFQFCLKYNRKSEFRRLCDKLRKHLEDICKSSNQTTGVSINKVETQQLCLDTRLYLLDSAIQMELWQEAYKAIEDIHGLMALSKKTPVPKTMANYYQKLAMVFSKAGNQLFHAAALLKLFQLTRELKKNLTKDDLQRMAAHVLLATLSIPLPSAHPEFDRFIEADKSPLEKAQKLAVLLGLPQPPTRVSLIREVVRLNVPQLVSEDFRNLYNWLEIDFNPLNLCKRIQSIVDIIEGGPAESNLLTPYIQSLKDVTIMRLIRQISQVYESIEFKRLLELASFCNIFELEKLLVESVRHNDMQIRIDHQKNSIYFGTDLTESQREYRPDGPSLQSMPSEQIRSQLVNMSTVLTRAVSIVYPNRERDQRAKLRTQMVHHYHEIKDREHQRILQRQKIIEDRKEYIEKQNNAREEEEARRQEEESRKAKLAEQKRLEQEQEERERKRHQNEIQAIREKSLKEKVQQISQTAHGKKMLSKLDEEGIKKLDAEQIAKRENEELQREAKELQSKLKSQEKKVDYFERAKRLEEIPLFEKYLAEKQVKDKEFWEATEKTRIENAIAERKDAVSQQERLKRMYPDRDEYLDALKKERASLYVEKLKKFEIALEVERKKRLADRIVRRREERRQAFLREKEEERLRKEEEIRLAQAAEERAAAEARRLEREAEDEKRRAQYEKQRAKEEEAERKIKEDRERLAREVAVERERSEKERDTWRPRGGDRPSAPAGGAGEWRRAAPPAGERNDRGAERSERGGDRNERGGDRIERGGDRIERGGERAERGGDRDRKDDGGADSSWRVRREPDSQRAAGAKDAGGAPASRDDKWRRGGDRERDRDFRNDGPRRDRDDRDDRDRGGFRRNDGPRRNDEPQRETGGNWRDAPRQSDRDNRRPGGERRDRDGRDVRGDQRGPASKEAGGGGGGGNWRTAPAPRDEKPAAKRDQPQDKENKGGDDGEWTSVKRR</sequence>
<feature type="chain" id="PRO_0000366334" description="Eukaryotic translation initiation factor 3 subunit A">
    <location>
        <begin position="1"/>
        <end position="1140"/>
    </location>
</feature>
<feature type="domain" description="PCI" evidence="2">
    <location>
        <begin position="319"/>
        <end position="502"/>
    </location>
</feature>
<feature type="region of interest" description="Disordered" evidence="3">
    <location>
        <begin position="589"/>
        <end position="632"/>
    </location>
</feature>
<feature type="region of interest" description="Disordered" evidence="3">
    <location>
        <begin position="830"/>
        <end position="1140"/>
    </location>
</feature>
<feature type="compositionally biased region" description="Basic and acidic residues" evidence="3">
    <location>
        <begin position="589"/>
        <end position="624"/>
    </location>
</feature>
<feature type="compositionally biased region" description="Basic and acidic residues" evidence="3">
    <location>
        <begin position="830"/>
        <end position="900"/>
    </location>
</feature>
<feature type="compositionally biased region" description="Basic and acidic residues" evidence="3">
    <location>
        <begin position="921"/>
        <end position="984"/>
    </location>
</feature>
<feature type="compositionally biased region" description="Low complexity" evidence="3">
    <location>
        <begin position="987"/>
        <end position="998"/>
    </location>
</feature>
<feature type="compositionally biased region" description="Basic and acidic residues" evidence="3">
    <location>
        <begin position="999"/>
        <end position="1050"/>
    </location>
</feature>
<feature type="compositionally biased region" description="Basic and acidic residues" evidence="3">
    <location>
        <begin position="1058"/>
        <end position="1086"/>
    </location>
</feature>
<feature type="compositionally biased region" description="Basic and acidic residues" evidence="3">
    <location>
        <begin position="1109"/>
        <end position="1130"/>
    </location>
</feature>
<name>EIF3A_DROAN</name>
<comment type="function">
    <text evidence="1">RNA-binding component of the eukaryotic translation initiation factor 3 (eIF-3) complex, which is involved in protein synthesis of a specialized repertoire of mRNAs and, together with other initiation factors, stimulates binding of mRNA and methionyl-tRNAi to the 40S ribosome. The eIF-3 complex specifically targets and initiates translation of a subset of mRNAs involved in cell proliferation.</text>
</comment>
<comment type="subunit">
    <text evidence="1">Component of the eukaryotic translation initiation factor 3 (eIF-3) complex. The eIF-3 complex interacts with pix.</text>
</comment>
<comment type="subcellular location">
    <subcellularLocation>
        <location evidence="1">Cytoplasm</location>
    </subcellularLocation>
</comment>
<comment type="similarity">
    <text evidence="1">Belongs to the eIF-3 subunit A family.</text>
</comment>
<gene>
    <name evidence="1" type="primary">eIF3a</name>
    <name evidence="1" type="synonym">eIF3-S10</name>
    <name type="ORF">GF16808</name>
</gene>
<proteinExistence type="inferred from homology"/>
<keyword id="KW-0963">Cytoplasm</keyword>
<keyword id="KW-0396">Initiation factor</keyword>
<keyword id="KW-0648">Protein biosynthesis</keyword>
<keyword id="KW-1185">Reference proteome</keyword>
<keyword id="KW-0694">RNA-binding</keyword>
<organism>
    <name type="scientific">Drosophila ananassae</name>
    <name type="common">Fruit fly</name>
    <dbReference type="NCBI Taxonomy" id="7217"/>
    <lineage>
        <taxon>Eukaryota</taxon>
        <taxon>Metazoa</taxon>
        <taxon>Ecdysozoa</taxon>
        <taxon>Arthropoda</taxon>
        <taxon>Hexapoda</taxon>
        <taxon>Insecta</taxon>
        <taxon>Pterygota</taxon>
        <taxon>Neoptera</taxon>
        <taxon>Endopterygota</taxon>
        <taxon>Diptera</taxon>
        <taxon>Brachycera</taxon>
        <taxon>Muscomorpha</taxon>
        <taxon>Ephydroidea</taxon>
        <taxon>Drosophilidae</taxon>
        <taxon>Drosophila</taxon>
        <taxon>Sophophora</taxon>
    </lineage>
</organism>
<accession>B3LY22</accession>
<dbReference type="EMBL" id="CH902617">
    <property type="protein sequence ID" value="EDV42878.1"/>
    <property type="molecule type" value="Genomic_DNA"/>
</dbReference>
<dbReference type="SMR" id="B3LY22"/>
<dbReference type="FunCoup" id="B3LY22">
    <property type="interactions" value="2525"/>
</dbReference>
<dbReference type="STRING" id="7217.B3LY22"/>
<dbReference type="EnsemblMetazoa" id="FBtr0121508">
    <property type="protein sequence ID" value="FBpp0120000"/>
    <property type="gene ID" value="FBgn0093829"/>
</dbReference>
<dbReference type="EnsemblMetazoa" id="XM_001954281.4">
    <property type="protein sequence ID" value="XP_001954317.1"/>
    <property type="gene ID" value="LOC6499602"/>
</dbReference>
<dbReference type="GeneID" id="6499602"/>
<dbReference type="KEGG" id="dan:6499602"/>
<dbReference type="CTD" id="8661"/>
<dbReference type="eggNOG" id="KOG2072">
    <property type="taxonomic scope" value="Eukaryota"/>
</dbReference>
<dbReference type="HOGENOM" id="CLU_002096_1_0_1"/>
<dbReference type="InParanoid" id="B3LY22"/>
<dbReference type="OMA" id="EHITNKR"/>
<dbReference type="OrthoDB" id="18884at2759"/>
<dbReference type="PhylomeDB" id="B3LY22"/>
<dbReference type="ChiTaRS" id="eIF3-S10">
    <property type="organism name" value="fly"/>
</dbReference>
<dbReference type="Proteomes" id="UP000007801">
    <property type="component" value="Unassembled WGS sequence"/>
</dbReference>
<dbReference type="GO" id="GO:0016282">
    <property type="term" value="C:eukaryotic 43S preinitiation complex"/>
    <property type="evidence" value="ECO:0007669"/>
    <property type="project" value="UniProtKB-UniRule"/>
</dbReference>
<dbReference type="GO" id="GO:0033290">
    <property type="term" value="C:eukaryotic 48S preinitiation complex"/>
    <property type="evidence" value="ECO:0007669"/>
    <property type="project" value="UniProtKB-UniRule"/>
</dbReference>
<dbReference type="GO" id="GO:0005852">
    <property type="term" value="C:eukaryotic translation initiation factor 3 complex"/>
    <property type="evidence" value="ECO:0000250"/>
    <property type="project" value="UniProtKB"/>
</dbReference>
<dbReference type="GO" id="GO:0071540">
    <property type="term" value="C:eukaryotic translation initiation factor 3 complex, eIF3e"/>
    <property type="evidence" value="ECO:0007669"/>
    <property type="project" value="TreeGrafter"/>
</dbReference>
<dbReference type="GO" id="GO:0071541">
    <property type="term" value="C:eukaryotic translation initiation factor 3 complex, eIF3m"/>
    <property type="evidence" value="ECO:0007669"/>
    <property type="project" value="TreeGrafter"/>
</dbReference>
<dbReference type="GO" id="GO:0043614">
    <property type="term" value="C:multi-eIF complex"/>
    <property type="evidence" value="ECO:0007669"/>
    <property type="project" value="TreeGrafter"/>
</dbReference>
<dbReference type="GO" id="GO:0003729">
    <property type="term" value="F:mRNA binding"/>
    <property type="evidence" value="ECO:0007669"/>
    <property type="project" value="TreeGrafter"/>
</dbReference>
<dbReference type="GO" id="GO:0003743">
    <property type="term" value="F:translation initiation factor activity"/>
    <property type="evidence" value="ECO:0000250"/>
    <property type="project" value="UniProtKB"/>
</dbReference>
<dbReference type="GO" id="GO:0001732">
    <property type="term" value="P:formation of cytoplasmic translation initiation complex"/>
    <property type="evidence" value="ECO:0007669"/>
    <property type="project" value="UniProtKB-UniRule"/>
</dbReference>
<dbReference type="GO" id="GO:0006446">
    <property type="term" value="P:regulation of translational initiation"/>
    <property type="evidence" value="ECO:0000250"/>
    <property type="project" value="UniProtKB"/>
</dbReference>
<dbReference type="GO" id="GO:0002188">
    <property type="term" value="P:translation reinitiation"/>
    <property type="evidence" value="ECO:0007669"/>
    <property type="project" value="TreeGrafter"/>
</dbReference>
<dbReference type="FunFam" id="1.25.40.860:FF:000007">
    <property type="entry name" value="Eukaryotic translation initiation factor 3 subunit A"/>
    <property type="match status" value="1"/>
</dbReference>
<dbReference type="FunFam" id="4.10.860.10:FF:000001">
    <property type="entry name" value="Eukaryotic translation initiation factor 3 subunit A"/>
    <property type="match status" value="1"/>
</dbReference>
<dbReference type="Gene3D" id="1.25.40.860">
    <property type="match status" value="2"/>
</dbReference>
<dbReference type="Gene3D" id="4.10.860.10">
    <property type="entry name" value="UVR domain"/>
    <property type="match status" value="1"/>
</dbReference>
<dbReference type="HAMAP" id="MF_03000">
    <property type="entry name" value="eIF3a"/>
    <property type="match status" value="1"/>
</dbReference>
<dbReference type="InterPro" id="IPR027512">
    <property type="entry name" value="EIF3A"/>
</dbReference>
<dbReference type="InterPro" id="IPR054711">
    <property type="entry name" value="eIF3a_PCI_TPR-like"/>
</dbReference>
<dbReference type="InterPro" id="IPR000717">
    <property type="entry name" value="PCI_dom"/>
</dbReference>
<dbReference type="PANTHER" id="PTHR14005:SF0">
    <property type="entry name" value="EUKARYOTIC TRANSLATION INITIATION FACTOR 3 SUBUNIT A"/>
    <property type="match status" value="1"/>
</dbReference>
<dbReference type="PANTHER" id="PTHR14005">
    <property type="entry name" value="EUKARYOTIC TRANSLATION INITIATION FACTOR 3, THETA SUBUNIT"/>
    <property type="match status" value="1"/>
</dbReference>
<dbReference type="Pfam" id="PF22591">
    <property type="entry name" value="eIF3a_PCI_TPR-like"/>
    <property type="match status" value="1"/>
</dbReference>
<dbReference type="Pfam" id="PF01399">
    <property type="entry name" value="PCI"/>
    <property type="match status" value="1"/>
</dbReference>
<dbReference type="SMART" id="SM00088">
    <property type="entry name" value="PINT"/>
    <property type="match status" value="1"/>
</dbReference>
<dbReference type="PROSITE" id="PS50250">
    <property type="entry name" value="PCI"/>
    <property type="match status" value="1"/>
</dbReference>
<evidence type="ECO:0000255" key="1">
    <source>
        <dbReference type="HAMAP-Rule" id="MF_03000"/>
    </source>
</evidence>
<evidence type="ECO:0000255" key="2">
    <source>
        <dbReference type="PROSITE-ProRule" id="PRU01185"/>
    </source>
</evidence>
<evidence type="ECO:0000256" key="3">
    <source>
        <dbReference type="SAM" id="MobiDB-lite"/>
    </source>
</evidence>
<protein>
    <recommendedName>
        <fullName evidence="1">Eukaryotic translation initiation factor 3 subunit A</fullName>
        <shortName evidence="1">eIF3a</shortName>
    </recommendedName>
    <alternativeName>
        <fullName evidence="1">Eukaryotic translation initiation factor 3 subunit 10</fullName>
    </alternativeName>
</protein>